<name>MDTD_ECOSE</name>
<feature type="chain" id="PRO_0000365279" description="Putative multidrug resistance protein MdtD">
    <location>
        <begin position="1"/>
        <end position="471"/>
    </location>
</feature>
<feature type="topological domain" description="Periplasmic" evidence="1">
    <location>
        <begin position="1"/>
        <end position="11"/>
    </location>
</feature>
<feature type="transmembrane region" description="Helical" evidence="1">
    <location>
        <begin position="12"/>
        <end position="32"/>
    </location>
</feature>
<feature type="topological domain" description="Cytoplasmic" evidence="1">
    <location>
        <begin position="33"/>
        <end position="48"/>
    </location>
</feature>
<feature type="transmembrane region" description="Helical" evidence="1">
    <location>
        <begin position="49"/>
        <end position="69"/>
    </location>
</feature>
<feature type="topological domain" description="Periplasmic" evidence="1">
    <location>
        <begin position="70"/>
        <end position="76"/>
    </location>
</feature>
<feature type="transmembrane region" description="Helical" evidence="1">
    <location>
        <begin position="77"/>
        <end position="97"/>
    </location>
</feature>
<feature type="topological domain" description="Cytoplasmic" evidence="1">
    <location>
        <begin position="98"/>
        <end position="101"/>
    </location>
</feature>
<feature type="transmembrane region" description="Helical" evidence="1">
    <location>
        <begin position="102"/>
        <end position="124"/>
    </location>
</feature>
<feature type="topological domain" description="Periplasmic" evidence="1">
    <location>
        <begin position="125"/>
        <end position="137"/>
    </location>
</feature>
<feature type="transmembrane region" description="Helical" evidence="1">
    <location>
        <begin position="138"/>
        <end position="158"/>
    </location>
</feature>
<feature type="topological domain" description="Cytoplasmic" evidence="1">
    <location>
        <begin position="159"/>
        <end position="164"/>
    </location>
</feature>
<feature type="transmembrane region" description="Helical" evidence="1">
    <location>
        <begin position="165"/>
        <end position="185"/>
    </location>
</feature>
<feature type="topological domain" description="Periplasmic" evidence="1">
    <location>
        <begin position="186"/>
        <end position="196"/>
    </location>
</feature>
<feature type="transmembrane region" description="Helical" evidence="1">
    <location>
        <begin position="197"/>
        <end position="217"/>
    </location>
</feature>
<feature type="topological domain" description="Cytoplasmic" evidence="1">
    <location>
        <begin position="218"/>
        <end position="224"/>
    </location>
</feature>
<feature type="transmembrane region" description="Helical" evidence="1">
    <location>
        <begin position="225"/>
        <end position="245"/>
    </location>
</feature>
<feature type="topological domain" description="Periplasmic" evidence="1">
    <location>
        <begin position="246"/>
        <end position="262"/>
    </location>
</feature>
<feature type="transmembrane region" description="Helical" evidence="1">
    <location>
        <begin position="263"/>
        <end position="283"/>
    </location>
</feature>
<feature type="topological domain" description="Cytoplasmic" evidence="1">
    <location>
        <begin position="284"/>
        <end position="285"/>
    </location>
</feature>
<feature type="transmembrane region" description="Helical" evidence="1">
    <location>
        <begin position="286"/>
        <end position="306"/>
    </location>
</feature>
<feature type="topological domain" description="Periplasmic" evidence="1">
    <location>
        <begin position="307"/>
        <end position="341"/>
    </location>
</feature>
<feature type="transmembrane region" description="Helical" evidence="1">
    <location>
        <begin position="342"/>
        <end position="362"/>
    </location>
</feature>
<feature type="topological domain" description="Cytoplasmic" evidence="1">
    <location>
        <begin position="363"/>
        <end position="395"/>
    </location>
</feature>
<feature type="transmembrane region" description="Helical" evidence="1">
    <location>
        <begin position="396"/>
        <end position="416"/>
    </location>
</feature>
<feature type="topological domain" description="Periplasmic" evidence="1">
    <location>
        <begin position="417"/>
        <end position="430"/>
    </location>
</feature>
<feature type="transmembrane region" description="Helical" evidence="1">
    <location>
        <begin position="431"/>
        <end position="451"/>
    </location>
</feature>
<feature type="topological domain" description="Cytoplasmic" evidence="1">
    <location>
        <begin position="452"/>
        <end position="471"/>
    </location>
</feature>
<organism>
    <name type="scientific">Escherichia coli (strain SE11)</name>
    <dbReference type="NCBI Taxonomy" id="409438"/>
    <lineage>
        <taxon>Bacteria</taxon>
        <taxon>Pseudomonadati</taxon>
        <taxon>Pseudomonadota</taxon>
        <taxon>Gammaproteobacteria</taxon>
        <taxon>Enterobacterales</taxon>
        <taxon>Enterobacteriaceae</taxon>
        <taxon>Escherichia</taxon>
    </lineage>
</organism>
<sequence>MTDLPDSTRWQLWIVAFGFFMQSLDTTIVNTALPSMAQSLGESPLHMHMVIVSYVLTVAVMLPASGWLADKVGVRNIFFTAIVLFTLGSLFCALSGTLNELLLARALQGVGGAMMVPVGRLTVMKIVPREQYMAAMTFVTLPGQVGPLLGPALGGLLVEYASWHWIFLINIPVGIIGAIATLMLMPNYTMQTRRFDLSGFLLLAVGMAVLTLALDGSKGTGLSPLTIDGLVAVGVVALVLYLLHARNNNRALFSLKLFRTRTFSLGLAGSFAGRIGSGMLPFMTPVFLQIGLGFSPFHAGLMMIPMVLGSMGMKRIVVQVVNRFGYRRVLVATTLGLSLVTLLFMTTALLGWYYVLPFVLFLQGMVNSTRFSSMNTLTLKDLPDNLASSGNSLLSMIMQLSMSIGVTIAGLLLGLFGSQHVSIDSGTTQTVFMYTWLSMALIIALPAFIFARVPNDTHQNVAISRRKRSAQ</sequence>
<evidence type="ECO:0000255" key="1">
    <source>
        <dbReference type="HAMAP-Rule" id="MF_01577"/>
    </source>
</evidence>
<proteinExistence type="inferred from homology"/>
<keyword id="KW-0997">Cell inner membrane</keyword>
<keyword id="KW-1003">Cell membrane</keyword>
<keyword id="KW-0472">Membrane</keyword>
<keyword id="KW-0812">Transmembrane</keyword>
<keyword id="KW-1133">Transmembrane helix</keyword>
<keyword id="KW-0813">Transport</keyword>
<accession>B6HYS2</accession>
<gene>
    <name evidence="1" type="primary">mdtD</name>
    <name type="ordered locus">ECSE_2350</name>
</gene>
<comment type="subcellular location">
    <subcellularLocation>
        <location evidence="1">Cell inner membrane</location>
        <topology evidence="1">Multi-pass membrane protein</topology>
    </subcellularLocation>
</comment>
<comment type="similarity">
    <text evidence="1">Belongs to the major facilitator superfamily. TCR/Tet family.</text>
</comment>
<reference key="1">
    <citation type="journal article" date="2008" name="DNA Res.">
        <title>Complete genome sequence and comparative analysis of the wild-type commensal Escherichia coli strain SE11 isolated from a healthy adult.</title>
        <authorList>
            <person name="Oshima K."/>
            <person name="Toh H."/>
            <person name="Ogura Y."/>
            <person name="Sasamoto H."/>
            <person name="Morita H."/>
            <person name="Park S.-H."/>
            <person name="Ooka T."/>
            <person name="Iyoda S."/>
            <person name="Taylor T.D."/>
            <person name="Hayashi T."/>
            <person name="Itoh K."/>
            <person name="Hattori M."/>
        </authorList>
    </citation>
    <scope>NUCLEOTIDE SEQUENCE [LARGE SCALE GENOMIC DNA]</scope>
    <source>
        <strain>SE11</strain>
    </source>
</reference>
<dbReference type="EMBL" id="AP009240">
    <property type="protein sequence ID" value="BAG77874.1"/>
    <property type="molecule type" value="Genomic_DNA"/>
</dbReference>
<dbReference type="RefSeq" id="WP_000130897.1">
    <property type="nucleotide sequence ID" value="NC_011415.1"/>
</dbReference>
<dbReference type="SMR" id="B6HYS2"/>
<dbReference type="KEGG" id="ecy:ECSE_2350"/>
<dbReference type="HOGENOM" id="CLU_000960_28_0_6"/>
<dbReference type="Proteomes" id="UP000008199">
    <property type="component" value="Chromosome"/>
</dbReference>
<dbReference type="GO" id="GO:0005886">
    <property type="term" value="C:plasma membrane"/>
    <property type="evidence" value="ECO:0007669"/>
    <property type="project" value="UniProtKB-SubCell"/>
</dbReference>
<dbReference type="GO" id="GO:0022857">
    <property type="term" value="F:transmembrane transporter activity"/>
    <property type="evidence" value="ECO:0007669"/>
    <property type="project" value="UniProtKB-UniRule"/>
</dbReference>
<dbReference type="CDD" id="cd17503">
    <property type="entry name" value="MFS_LmrB_MDR_like"/>
    <property type="match status" value="1"/>
</dbReference>
<dbReference type="FunFam" id="1.20.1250.20:FF:000021">
    <property type="entry name" value="Putative multidrug resistance protein MdtD"/>
    <property type="match status" value="1"/>
</dbReference>
<dbReference type="FunFam" id="1.20.1720.10:FF:000001">
    <property type="entry name" value="Putative multidrug resistance protein MdtD"/>
    <property type="match status" value="1"/>
</dbReference>
<dbReference type="Gene3D" id="1.20.1250.20">
    <property type="entry name" value="MFS general substrate transporter like domains"/>
    <property type="match status" value="1"/>
</dbReference>
<dbReference type="Gene3D" id="1.20.1720.10">
    <property type="entry name" value="Multidrug resistance protein D"/>
    <property type="match status" value="1"/>
</dbReference>
<dbReference type="HAMAP" id="MF_01577">
    <property type="entry name" value="MFS_MdtD"/>
    <property type="match status" value="1"/>
</dbReference>
<dbReference type="InterPro" id="IPR004638">
    <property type="entry name" value="EmrB-like"/>
</dbReference>
<dbReference type="InterPro" id="IPR011701">
    <property type="entry name" value="MFS"/>
</dbReference>
<dbReference type="InterPro" id="IPR020846">
    <property type="entry name" value="MFS_dom"/>
</dbReference>
<dbReference type="InterPro" id="IPR036259">
    <property type="entry name" value="MFS_trans_sf"/>
</dbReference>
<dbReference type="InterPro" id="IPR023721">
    <property type="entry name" value="Multi-R_MdtD"/>
</dbReference>
<dbReference type="NCBIfam" id="TIGR00711">
    <property type="entry name" value="efflux_EmrB"/>
    <property type="match status" value="1"/>
</dbReference>
<dbReference type="NCBIfam" id="NF007799">
    <property type="entry name" value="PRK10504.1"/>
    <property type="match status" value="1"/>
</dbReference>
<dbReference type="PANTHER" id="PTHR42718:SF46">
    <property type="entry name" value="BLR6921 PROTEIN"/>
    <property type="match status" value="1"/>
</dbReference>
<dbReference type="PANTHER" id="PTHR42718">
    <property type="entry name" value="MAJOR FACILITATOR SUPERFAMILY MULTIDRUG TRANSPORTER MFSC"/>
    <property type="match status" value="1"/>
</dbReference>
<dbReference type="Pfam" id="PF07690">
    <property type="entry name" value="MFS_1"/>
    <property type="match status" value="1"/>
</dbReference>
<dbReference type="PRINTS" id="PR01036">
    <property type="entry name" value="TCRTETB"/>
</dbReference>
<dbReference type="SUPFAM" id="SSF103473">
    <property type="entry name" value="MFS general substrate transporter"/>
    <property type="match status" value="1"/>
</dbReference>
<dbReference type="PROSITE" id="PS50850">
    <property type="entry name" value="MFS"/>
    <property type="match status" value="1"/>
</dbReference>
<protein>
    <recommendedName>
        <fullName evidence="1">Putative multidrug resistance protein MdtD</fullName>
    </recommendedName>
</protein>